<dbReference type="EC" id="5.3.1.26" evidence="1"/>
<dbReference type="EMBL" id="CP000046">
    <property type="protein sequence ID" value="AAW37062.1"/>
    <property type="molecule type" value="Genomic_DNA"/>
</dbReference>
<dbReference type="RefSeq" id="WP_000974608.1">
    <property type="nucleotide sequence ID" value="NZ_JBGOFO010000004.1"/>
</dbReference>
<dbReference type="SMR" id="Q5HE10"/>
<dbReference type="GeneID" id="98347039"/>
<dbReference type="KEGG" id="sac:SACOL2186"/>
<dbReference type="HOGENOM" id="CLU_091396_4_2_9"/>
<dbReference type="UniPathway" id="UPA00702">
    <property type="reaction ID" value="UER00714"/>
</dbReference>
<dbReference type="Proteomes" id="UP000000530">
    <property type="component" value="Chromosome"/>
</dbReference>
<dbReference type="GO" id="GO:0050044">
    <property type="term" value="F:galactose-6-phosphate isomerase activity"/>
    <property type="evidence" value="ECO:0007669"/>
    <property type="project" value="UniProtKB-UniRule"/>
</dbReference>
<dbReference type="GO" id="GO:0004751">
    <property type="term" value="F:ribose-5-phosphate isomerase activity"/>
    <property type="evidence" value="ECO:0007669"/>
    <property type="project" value="TreeGrafter"/>
</dbReference>
<dbReference type="GO" id="GO:0019316">
    <property type="term" value="P:D-allose catabolic process"/>
    <property type="evidence" value="ECO:0007669"/>
    <property type="project" value="TreeGrafter"/>
</dbReference>
<dbReference type="GO" id="GO:0019388">
    <property type="term" value="P:galactose catabolic process"/>
    <property type="evidence" value="ECO:0007669"/>
    <property type="project" value="UniProtKB-UniPathway"/>
</dbReference>
<dbReference type="GO" id="GO:0019512">
    <property type="term" value="P:lactose catabolic process via tagatose-6-phosphate"/>
    <property type="evidence" value="ECO:0007669"/>
    <property type="project" value="UniProtKB-UniRule"/>
</dbReference>
<dbReference type="GO" id="GO:0009052">
    <property type="term" value="P:pentose-phosphate shunt, non-oxidative branch"/>
    <property type="evidence" value="ECO:0007669"/>
    <property type="project" value="TreeGrafter"/>
</dbReference>
<dbReference type="Gene3D" id="3.40.1400.10">
    <property type="entry name" value="Sugar-phosphate isomerase, RpiB/LacA/LacB"/>
    <property type="match status" value="1"/>
</dbReference>
<dbReference type="HAMAP" id="MF_01555">
    <property type="entry name" value="LacA"/>
    <property type="match status" value="1"/>
</dbReference>
<dbReference type="InterPro" id="IPR004783">
    <property type="entry name" value="LacA"/>
</dbReference>
<dbReference type="InterPro" id="IPR003500">
    <property type="entry name" value="RpiB_LacA_LacB"/>
</dbReference>
<dbReference type="InterPro" id="IPR036569">
    <property type="entry name" value="RpiB_LacA_LacB_sf"/>
</dbReference>
<dbReference type="NCBIfam" id="TIGR01118">
    <property type="entry name" value="lacA"/>
    <property type="match status" value="1"/>
</dbReference>
<dbReference type="NCBIfam" id="NF006380">
    <property type="entry name" value="PRK08621.1"/>
    <property type="match status" value="1"/>
</dbReference>
<dbReference type="NCBIfam" id="TIGR00689">
    <property type="entry name" value="rpiB_lacA_lacB"/>
    <property type="match status" value="1"/>
</dbReference>
<dbReference type="PANTHER" id="PTHR30345:SF5">
    <property type="entry name" value="GALACTOSE-6-PHOSPHATE ISOMERASE SUBUNIT LACA"/>
    <property type="match status" value="1"/>
</dbReference>
<dbReference type="PANTHER" id="PTHR30345">
    <property type="entry name" value="RIBOSE-5-PHOSPHATE ISOMERASE B"/>
    <property type="match status" value="1"/>
</dbReference>
<dbReference type="Pfam" id="PF02502">
    <property type="entry name" value="LacAB_rpiB"/>
    <property type="match status" value="1"/>
</dbReference>
<dbReference type="PIRSF" id="PIRSF005384">
    <property type="entry name" value="RpiB_LacA_B"/>
    <property type="match status" value="1"/>
</dbReference>
<dbReference type="SUPFAM" id="SSF89623">
    <property type="entry name" value="Ribose/Galactose isomerase RpiB/AlsB"/>
    <property type="match status" value="1"/>
</dbReference>
<feature type="chain" id="PRO_0000208106" description="Galactose-6-phosphate isomerase subunit LacA">
    <location>
        <begin position="1"/>
        <end position="142"/>
    </location>
</feature>
<accession>Q5HE10</accession>
<comment type="catalytic activity">
    <reaction evidence="1">
        <text>aldehydo-D-galactose 6-phosphate = keto-D-tagatose 6-phosphate</text>
        <dbReference type="Rhea" id="RHEA:13033"/>
        <dbReference type="ChEBI" id="CHEBI:58255"/>
        <dbReference type="ChEBI" id="CHEBI:134283"/>
        <dbReference type="EC" id="5.3.1.26"/>
    </reaction>
</comment>
<comment type="pathway">
    <text evidence="1">Carbohydrate metabolism; D-galactose 6-phosphate degradation; D-tagatose 6-phosphate from D-galactose 6-phosphate: step 1/1.</text>
</comment>
<comment type="subunit">
    <text evidence="1">Heteromultimeric protein consisting of LacA and LacB.</text>
</comment>
<comment type="similarity">
    <text evidence="1">Belongs to the LacAB/RpiB family.</text>
</comment>
<protein>
    <recommendedName>
        <fullName evidence="1">Galactose-6-phosphate isomerase subunit LacA</fullName>
        <ecNumber evidence="1">5.3.1.26</ecNumber>
    </recommendedName>
</protein>
<sequence>MAIIIGSDEAGKRLKEVIKSYLLDNKYDVVDVTEGQEVDFVDATLAVAKDVQSQEGNLGIVIDAFGAGSFMVATKIKGMIAAEVSDERSGYMTRGHNNSRMITMGSEIVGDTLAKNVVKGFVEGKYDGGRHQIRVDMLNKMC</sequence>
<proteinExistence type="inferred from homology"/>
<reference key="1">
    <citation type="journal article" date="2005" name="J. Bacteriol.">
        <title>Insights on evolution of virulence and resistance from the complete genome analysis of an early methicillin-resistant Staphylococcus aureus strain and a biofilm-producing methicillin-resistant Staphylococcus epidermidis strain.</title>
        <authorList>
            <person name="Gill S.R."/>
            <person name="Fouts D.E."/>
            <person name="Archer G.L."/>
            <person name="Mongodin E.F."/>
            <person name="DeBoy R.T."/>
            <person name="Ravel J."/>
            <person name="Paulsen I.T."/>
            <person name="Kolonay J.F."/>
            <person name="Brinkac L.M."/>
            <person name="Beanan M.J."/>
            <person name="Dodson R.J."/>
            <person name="Daugherty S.C."/>
            <person name="Madupu R."/>
            <person name="Angiuoli S.V."/>
            <person name="Durkin A.S."/>
            <person name="Haft D.H."/>
            <person name="Vamathevan J.J."/>
            <person name="Khouri H."/>
            <person name="Utterback T.R."/>
            <person name="Lee C."/>
            <person name="Dimitrov G."/>
            <person name="Jiang L."/>
            <person name="Qin H."/>
            <person name="Weidman J."/>
            <person name="Tran K."/>
            <person name="Kang K.H."/>
            <person name="Hance I.R."/>
            <person name="Nelson K.E."/>
            <person name="Fraser C.M."/>
        </authorList>
    </citation>
    <scope>NUCLEOTIDE SEQUENCE [LARGE SCALE GENOMIC DNA]</scope>
    <source>
        <strain>COL</strain>
    </source>
</reference>
<keyword id="KW-0413">Isomerase</keyword>
<keyword id="KW-0423">Lactose metabolism</keyword>
<name>LACA_STAAC</name>
<evidence type="ECO:0000255" key="1">
    <source>
        <dbReference type="HAMAP-Rule" id="MF_01555"/>
    </source>
</evidence>
<gene>
    <name evidence="1" type="primary">lacA</name>
    <name type="ordered locus">SACOL2186</name>
</gene>
<organism>
    <name type="scientific">Staphylococcus aureus (strain COL)</name>
    <dbReference type="NCBI Taxonomy" id="93062"/>
    <lineage>
        <taxon>Bacteria</taxon>
        <taxon>Bacillati</taxon>
        <taxon>Bacillota</taxon>
        <taxon>Bacilli</taxon>
        <taxon>Bacillales</taxon>
        <taxon>Staphylococcaceae</taxon>
        <taxon>Staphylococcus</taxon>
    </lineage>
</organism>